<organism>
    <name type="scientific">Blastomyces gilchristii (strain SLH14081)</name>
    <name type="common">Blastomyces dermatitidis</name>
    <dbReference type="NCBI Taxonomy" id="559298"/>
    <lineage>
        <taxon>Eukaryota</taxon>
        <taxon>Fungi</taxon>
        <taxon>Dikarya</taxon>
        <taxon>Ascomycota</taxon>
        <taxon>Pezizomycotina</taxon>
        <taxon>Eurotiomycetes</taxon>
        <taxon>Eurotiomycetidae</taxon>
        <taxon>Onygenales</taxon>
        <taxon>Ajellomycetaceae</taxon>
        <taxon>Blastomyces</taxon>
    </lineage>
</organism>
<name>P20D1_BLAGS</name>
<dbReference type="EC" id="3.4.17.-"/>
<dbReference type="EMBL" id="GG657450">
    <property type="protein sequence ID" value="OAT05402.1"/>
    <property type="molecule type" value="Genomic_DNA"/>
</dbReference>
<dbReference type="RefSeq" id="XP_002627132.1">
    <property type="nucleotide sequence ID" value="XM_002627086.2"/>
</dbReference>
<dbReference type="SMR" id="C5JH24"/>
<dbReference type="STRING" id="559298.C5JH24"/>
<dbReference type="GeneID" id="8506742"/>
<dbReference type="KEGG" id="bgh:BDBG_01803"/>
<dbReference type="VEuPathDB" id="FungiDB:BDBG_01803"/>
<dbReference type="HOGENOM" id="CLU_021802_3_0_1"/>
<dbReference type="OrthoDB" id="3064516at2759"/>
<dbReference type="Proteomes" id="UP000002038">
    <property type="component" value="Unassembled WGS sequence"/>
</dbReference>
<dbReference type="GO" id="GO:0005576">
    <property type="term" value="C:extracellular region"/>
    <property type="evidence" value="ECO:0007669"/>
    <property type="project" value="UniProtKB-SubCell"/>
</dbReference>
<dbReference type="GO" id="GO:0046872">
    <property type="term" value="F:metal ion binding"/>
    <property type="evidence" value="ECO:0007669"/>
    <property type="project" value="UniProtKB-KW"/>
</dbReference>
<dbReference type="GO" id="GO:0008233">
    <property type="term" value="F:peptidase activity"/>
    <property type="evidence" value="ECO:0007669"/>
    <property type="project" value="UniProtKB-KW"/>
</dbReference>
<dbReference type="GO" id="GO:0006508">
    <property type="term" value="P:proteolysis"/>
    <property type="evidence" value="ECO:0007669"/>
    <property type="project" value="UniProtKB-KW"/>
</dbReference>
<dbReference type="CDD" id="cd05652">
    <property type="entry name" value="M20_ArgE_DapE-like_fungal"/>
    <property type="match status" value="1"/>
</dbReference>
<dbReference type="Gene3D" id="3.30.70.360">
    <property type="match status" value="1"/>
</dbReference>
<dbReference type="Gene3D" id="3.40.630.10">
    <property type="entry name" value="Zn peptidases"/>
    <property type="match status" value="1"/>
</dbReference>
<dbReference type="InterPro" id="IPR036264">
    <property type="entry name" value="Bact_exopeptidase_dim_dom"/>
</dbReference>
<dbReference type="InterPro" id="IPR002933">
    <property type="entry name" value="Peptidase_M20"/>
</dbReference>
<dbReference type="InterPro" id="IPR011650">
    <property type="entry name" value="Peptidase_M20_dimer"/>
</dbReference>
<dbReference type="InterPro" id="IPR050072">
    <property type="entry name" value="Peptidase_M20A"/>
</dbReference>
<dbReference type="PANTHER" id="PTHR43808">
    <property type="entry name" value="ACETYLORNITHINE DEACETYLASE"/>
    <property type="match status" value="1"/>
</dbReference>
<dbReference type="PANTHER" id="PTHR43808:SF8">
    <property type="entry name" value="PEPTIDASE M20 DIMERISATION DOMAIN-CONTAINING PROTEIN"/>
    <property type="match status" value="1"/>
</dbReference>
<dbReference type="Pfam" id="PF07687">
    <property type="entry name" value="M20_dimer"/>
    <property type="match status" value="1"/>
</dbReference>
<dbReference type="Pfam" id="PF01546">
    <property type="entry name" value="Peptidase_M20"/>
    <property type="match status" value="1"/>
</dbReference>
<dbReference type="SUPFAM" id="SSF55031">
    <property type="entry name" value="Bacterial exopeptidase dimerisation domain"/>
    <property type="match status" value="1"/>
</dbReference>
<dbReference type="SUPFAM" id="SSF53187">
    <property type="entry name" value="Zn-dependent exopeptidases"/>
    <property type="match status" value="1"/>
</dbReference>
<sequence>MKLSHLAAALSAQLVAPVAAGYLRQDILTAGTLRNTTVPAAPNEDLNQIVSDSQLLSLHRTICEIESVSNHESTVGEALIKYLGEHDFTTEKQIVPVDEDDDSTDERYNVWAYPKGSPKPKIILTSHIDTVPPHINYSLHAPEGDFDRANITIKGRGTVDAKASVAAMIIAALDHMKESPDVPVGLLFVVSEERGGTGMIHFSDSELNTSPPFFHTLIFGEPTELKLVDGHKGNLRFDVEAKGVSAHSGYPWLGHSAISEILPVLARIDGLGDIPVEDGGLPSSEKYGSTTLNIGTVRGGAAGNVVPESASASVAVRLADGTVEDAQDIIRKAVADASGGSKNITLKFPDDKAYPPIDLDTDVDGFELLTVNYGTDIPKLDIHDEDSDVKVKRYLYGPGTILVAHGVDEGLTVGDLEKAVEGYSKLIDAAVKRG</sequence>
<accession>C5JH24</accession>
<accession>A0A179UFW5</accession>
<reference key="1">
    <citation type="journal article" date="2015" name="PLoS Genet.">
        <title>The dynamic genome and transcriptome of the human fungal pathogen Blastomyces and close relative Emmonsia.</title>
        <authorList>
            <person name="Munoz J.F."/>
            <person name="Gauthier G.M."/>
            <person name="Desjardins C.A."/>
            <person name="Gallo J.E."/>
            <person name="Holder J."/>
            <person name="Sullivan T.D."/>
            <person name="Marty A.J."/>
            <person name="Carmen J.C."/>
            <person name="Chen Z."/>
            <person name="Ding L."/>
            <person name="Gujja S."/>
            <person name="Magrini V."/>
            <person name="Misas E."/>
            <person name="Mitreva M."/>
            <person name="Priest M."/>
            <person name="Saif S."/>
            <person name="Whiston E.A."/>
            <person name="Young S."/>
            <person name="Zeng Q."/>
            <person name="Goldman W.E."/>
            <person name="Mardis E.R."/>
            <person name="Taylor J.W."/>
            <person name="McEwen J.G."/>
            <person name="Clay O.K."/>
            <person name="Klein B.S."/>
            <person name="Cuomo C.A."/>
        </authorList>
    </citation>
    <scope>NUCLEOTIDE SEQUENCE [LARGE SCALE GENOMIC DNA]</scope>
    <source>
        <strain>SLH14081</strain>
    </source>
</reference>
<protein>
    <recommendedName>
        <fullName>Probable carboxypeptidase BDBG_01803</fullName>
        <ecNumber>3.4.17.-</ecNumber>
    </recommendedName>
    <alternativeName>
        <fullName>Peptidase M20 domain-containing protein BDBG_01803</fullName>
    </alternativeName>
</protein>
<feature type="signal peptide" evidence="2">
    <location>
        <begin position="1"/>
        <end position="20"/>
    </location>
</feature>
<feature type="chain" id="PRO_0000411223" description="Probable carboxypeptidase BDBG_01803">
    <location>
        <begin position="21"/>
        <end position="434"/>
    </location>
</feature>
<feature type="active site" description="Proton acceptor" evidence="1">
    <location>
        <position position="192"/>
    </location>
</feature>
<feature type="binding site" evidence="1">
    <location>
        <position position="160"/>
    </location>
    <ligand>
        <name>Zn(2+)</name>
        <dbReference type="ChEBI" id="CHEBI:29105"/>
        <label>1</label>
    </ligand>
</feature>
<feature type="binding site" evidence="1">
    <location>
        <position position="160"/>
    </location>
    <ligand>
        <name>Zn(2+)</name>
        <dbReference type="ChEBI" id="CHEBI:29105"/>
        <label>2</label>
    </ligand>
</feature>
<feature type="binding site" evidence="1">
    <location>
        <position position="193"/>
    </location>
    <ligand>
        <name>Zn(2+)</name>
        <dbReference type="ChEBI" id="CHEBI:29105"/>
        <label>1</label>
    </ligand>
</feature>
<feature type="glycosylation site" description="N-linked (GlcNAc...) asparagine" evidence="2">
    <location>
        <position position="35"/>
    </location>
</feature>
<feature type="glycosylation site" description="N-linked (GlcNAc...) asparagine" evidence="2">
    <location>
        <position position="136"/>
    </location>
</feature>
<feature type="glycosylation site" description="N-linked (GlcNAc...) asparagine" evidence="2">
    <location>
        <position position="150"/>
    </location>
</feature>
<feature type="glycosylation site" description="N-linked (GlcNAc...) asparagine" evidence="2">
    <location>
        <position position="343"/>
    </location>
</feature>
<keyword id="KW-0325">Glycoprotein</keyword>
<keyword id="KW-0378">Hydrolase</keyword>
<keyword id="KW-0479">Metal-binding</keyword>
<keyword id="KW-0645">Protease</keyword>
<keyword id="KW-1185">Reference proteome</keyword>
<keyword id="KW-0964">Secreted</keyword>
<keyword id="KW-0732">Signal</keyword>
<keyword id="KW-0862">Zinc</keyword>
<evidence type="ECO:0000250" key="1"/>
<evidence type="ECO:0000255" key="2"/>
<evidence type="ECO:0000305" key="3"/>
<proteinExistence type="inferred from homology"/>
<comment type="cofactor">
    <cofactor evidence="1">
        <name>Zn(2+)</name>
        <dbReference type="ChEBI" id="CHEBI:29105"/>
    </cofactor>
    <text evidence="1">Binds 2 Zn(2+) ions per subunit.</text>
</comment>
<comment type="subcellular location">
    <subcellularLocation>
        <location evidence="3">Secreted</location>
    </subcellularLocation>
</comment>
<comment type="similarity">
    <text evidence="3">Belongs to the peptidase M20A family.</text>
</comment>
<gene>
    <name type="ORF">BDBG_01803</name>
</gene>